<protein>
    <recommendedName>
        <fullName>Iron sulfur cluster assembly protein 1</fullName>
    </recommendedName>
    <alternativeName>
        <fullName>Iron sulfur cluster scaffold protein 1</fullName>
    </alternativeName>
</protein>
<organism>
    <name type="scientific">Encephalitozoon cuniculi (strain GB-M1)</name>
    <name type="common">Microsporidian parasite</name>
    <dbReference type="NCBI Taxonomy" id="284813"/>
    <lineage>
        <taxon>Eukaryota</taxon>
        <taxon>Fungi</taxon>
        <taxon>Fungi incertae sedis</taxon>
        <taxon>Microsporidia</taxon>
        <taxon>Unikaryonidae</taxon>
        <taxon>Encephalitozoon</taxon>
    </lineage>
</organism>
<gene>
    <name type="primary">ISU1</name>
    <name type="ordered locus">ECU01_0510</name>
</gene>
<comment type="function">
    <text evidence="1 3">Scaffold protein for the de novo synthesis of iron-sulfur (Fe-S) clusters within mitosomes, which is required for maturation of both [2Fe-2S] and [4Fe-4S] proteins (PubMed:18311129). First, a [2Fe-2S] cluster is transiently assembled on the scaffold protein ISU1. In a second step, the cluster is released from ISU1, transferred to a glutaredoxin, followed by the formation of [2Fe-2S] proteins, the synthesis of [4Fe-4S] clusters and their target-specific insertion into the recipient apoproteins. Cluster assembly on ISU1 depends on the function of the cysteine desulfurase complex NFS1-ISD11, which serves as the sulfur donor for cluster synthesis, the iron-binding protein frataxin as the putative iron donor, and the electron transfer chain comprised of ferredoxin reductase and ferredoxin, which receive their electrons from NADH (By similarity).</text>
</comment>
<comment type="cofactor">
    <cofactor evidence="2">
        <name>[2Fe-2S] cluster</name>
        <dbReference type="ChEBI" id="CHEBI:190135"/>
    </cofactor>
    <text evidence="2">Binds 1 [2Fe-2S] cluster per subunit.</text>
</comment>
<comment type="pathway">
    <text evidence="1">Cofactor biosynthesis; iron-sulfur cluster biosynthesis.</text>
</comment>
<comment type="subunit">
    <text evidence="1">Component of the core Fe-S cluster (ISC) assembly machinery.</text>
</comment>
<comment type="subcellular location">
    <subcellularLocation>
        <location evidence="3">Mitosome matrix</location>
    </subcellularLocation>
</comment>
<comment type="similarity">
    <text evidence="4">Belongs to the NifU family.</text>
</comment>
<reference key="1">
    <citation type="journal article" date="2001" name="Genome Res.">
        <title>Sequence and analysis of chromosome I of the amitochondriate intracellular parasite Encephalitozoon cuniculi (Microspora).</title>
        <authorList>
            <person name="Peyret P."/>
            <person name="Katinka M.D."/>
            <person name="Duprat S."/>
            <person name="Duffieux F."/>
            <person name="Barbe V."/>
            <person name="Barbazanges M."/>
            <person name="Weissenbach J."/>
            <person name="Saurin W."/>
            <person name="Vivares C.P."/>
        </authorList>
    </citation>
    <scope>NUCLEOTIDE SEQUENCE [LARGE SCALE GENOMIC DNA]</scope>
    <source>
        <strain>GB-M1</strain>
    </source>
</reference>
<reference key="2">
    <citation type="journal article" date="2001" name="Nature">
        <title>Genome sequence and gene compaction of the eukaryote parasite Encephalitozoon cuniculi.</title>
        <authorList>
            <person name="Katinka M.D."/>
            <person name="Duprat S."/>
            <person name="Cornillot E."/>
            <person name="Metenier G."/>
            <person name="Thomarat F."/>
            <person name="Prensier G."/>
            <person name="Barbe V."/>
            <person name="Peyretaillade E."/>
            <person name="Brottier P."/>
            <person name="Wincker P."/>
            <person name="Delbac F."/>
            <person name="El Alaoui H."/>
            <person name="Peyret P."/>
            <person name="Saurin W."/>
            <person name="Gouy M."/>
            <person name="Weissenbach J."/>
            <person name="Vivares C.P."/>
        </authorList>
    </citation>
    <scope>NUCLEOTIDE SEQUENCE [LARGE SCALE GENOMIC DNA]</scope>
    <source>
        <strain>GB-M1</strain>
    </source>
</reference>
<reference key="3">
    <citation type="journal article" date="2008" name="Nature">
        <title>Localization and functionality of microsporidian iron-sulphur cluster assembly proteins.</title>
        <authorList>
            <person name="Goldberg A.V."/>
            <person name="Molik S."/>
            <person name="Tsaousis A.D."/>
            <person name="Neumann K."/>
            <person name="Kuhnke G."/>
            <person name="Delbac F."/>
            <person name="Vivares C.P."/>
            <person name="Hirt R.P."/>
            <person name="Lill R."/>
            <person name="Embley T.M."/>
        </authorList>
    </citation>
    <scope>SUBCELLULAR LOCATION</scope>
    <scope>FUNCTION</scope>
</reference>
<sequence length="140" mass="15095">MSALQELSGITGKYDSSVVDHFENPRNVGSLDKTDPRVGTGMVGAPACGDVMKLQIKVGKDNVIEDAKFKTFGCGSAIASSSLATEWIKKKTIDESLKISNRDIAKKLSLPPIKLHCSMLAEDAIKMAIKDFLDKNKPSP</sequence>
<feature type="chain" id="PRO_0000382932" description="Iron sulfur cluster assembly protein 1">
    <location>
        <begin position="1"/>
        <end position="140"/>
    </location>
</feature>
<dbReference type="EMBL" id="AL391737">
    <property type="protein sequence ID" value="CAD24920.1"/>
    <property type="molecule type" value="Genomic_DNA"/>
</dbReference>
<dbReference type="RefSeq" id="XP_965885.1">
    <property type="nucleotide sequence ID" value="XM_960792.1"/>
</dbReference>
<dbReference type="SMR" id="Q8SSM2"/>
<dbReference type="FunCoup" id="Q8SSM2">
    <property type="interactions" value="51"/>
</dbReference>
<dbReference type="STRING" id="284813.Q8SSM2"/>
<dbReference type="VEuPathDB" id="MicrosporidiaDB:ECU01_0510"/>
<dbReference type="HOGENOM" id="CLU_079283_5_0_1"/>
<dbReference type="InParanoid" id="Q8SSM2"/>
<dbReference type="OMA" id="YMTERVR"/>
<dbReference type="OrthoDB" id="1925777at2759"/>
<dbReference type="UniPathway" id="UPA00266"/>
<dbReference type="Proteomes" id="UP000000819">
    <property type="component" value="Chromosome I"/>
</dbReference>
<dbReference type="GO" id="GO:0032047">
    <property type="term" value="C:mitosome"/>
    <property type="evidence" value="ECO:0007669"/>
    <property type="project" value="UniProtKB-KW"/>
</dbReference>
<dbReference type="GO" id="GO:0051537">
    <property type="term" value="F:2 iron, 2 sulfur cluster binding"/>
    <property type="evidence" value="ECO:0007669"/>
    <property type="project" value="UniProtKB-KW"/>
</dbReference>
<dbReference type="GO" id="GO:0005506">
    <property type="term" value="F:iron ion binding"/>
    <property type="evidence" value="ECO:0007669"/>
    <property type="project" value="InterPro"/>
</dbReference>
<dbReference type="GO" id="GO:0016226">
    <property type="term" value="P:iron-sulfur cluster assembly"/>
    <property type="evidence" value="ECO:0007669"/>
    <property type="project" value="InterPro"/>
</dbReference>
<dbReference type="CDD" id="cd06664">
    <property type="entry name" value="IscU_like"/>
    <property type="match status" value="1"/>
</dbReference>
<dbReference type="FunFam" id="3.90.1010.10:FF:000008">
    <property type="entry name" value="Iron-sulfur cluster assembly enzyme"/>
    <property type="match status" value="1"/>
</dbReference>
<dbReference type="Gene3D" id="3.90.1010.10">
    <property type="match status" value="1"/>
</dbReference>
<dbReference type="InterPro" id="IPR011339">
    <property type="entry name" value="ISCU"/>
</dbReference>
<dbReference type="InterPro" id="IPR002871">
    <property type="entry name" value="NIF_FeS_clus_asmbl_NifU_N"/>
</dbReference>
<dbReference type="NCBIfam" id="TIGR01999">
    <property type="entry name" value="iscU"/>
    <property type="match status" value="1"/>
</dbReference>
<dbReference type="PANTHER" id="PTHR10093">
    <property type="entry name" value="IRON-SULFUR CLUSTER ASSEMBLY ENZYME NIFU HOMOLOG"/>
    <property type="match status" value="1"/>
</dbReference>
<dbReference type="Pfam" id="PF01592">
    <property type="entry name" value="NifU_N"/>
    <property type="match status" value="1"/>
</dbReference>
<dbReference type="SUPFAM" id="SSF82649">
    <property type="entry name" value="SufE/NifU"/>
    <property type="match status" value="1"/>
</dbReference>
<accession>Q8SSM2</accession>
<name>ISU1_ENCCU</name>
<proteinExistence type="inferred from homology"/>
<evidence type="ECO:0000250" key="1">
    <source>
        <dbReference type="UniProtKB" id="Q03020"/>
    </source>
</evidence>
<evidence type="ECO:0000250" key="2">
    <source>
        <dbReference type="UniProtKB" id="Q9UTC6"/>
    </source>
</evidence>
<evidence type="ECO:0000269" key="3">
    <source>
    </source>
</evidence>
<evidence type="ECO:0000305" key="4"/>
<keyword id="KW-0001">2Fe-2S</keyword>
<keyword id="KW-0408">Iron</keyword>
<keyword id="KW-0411">Iron-sulfur</keyword>
<keyword id="KW-0479">Metal-binding</keyword>
<keyword id="KW-1025">Mitosome</keyword>
<keyword id="KW-1185">Reference proteome</keyword>